<dbReference type="EMBL" id="AE017143">
    <property type="protein sequence ID" value="AAP96265.1"/>
    <property type="molecule type" value="Genomic_DNA"/>
</dbReference>
<dbReference type="RefSeq" id="WP_010945310.1">
    <property type="nucleotide sequence ID" value="NC_002940.2"/>
</dbReference>
<dbReference type="SMR" id="Q7VLI2"/>
<dbReference type="STRING" id="233412.HD_1461"/>
<dbReference type="KEGG" id="hdu:HD_1461"/>
<dbReference type="eggNOG" id="COG0532">
    <property type="taxonomic scope" value="Bacteria"/>
</dbReference>
<dbReference type="HOGENOM" id="CLU_006301_6_3_6"/>
<dbReference type="OrthoDB" id="9811804at2"/>
<dbReference type="Proteomes" id="UP000001022">
    <property type="component" value="Chromosome"/>
</dbReference>
<dbReference type="GO" id="GO:0005829">
    <property type="term" value="C:cytosol"/>
    <property type="evidence" value="ECO:0007669"/>
    <property type="project" value="TreeGrafter"/>
</dbReference>
<dbReference type="GO" id="GO:0005525">
    <property type="term" value="F:GTP binding"/>
    <property type="evidence" value="ECO:0007669"/>
    <property type="project" value="UniProtKB-KW"/>
</dbReference>
<dbReference type="GO" id="GO:0003924">
    <property type="term" value="F:GTPase activity"/>
    <property type="evidence" value="ECO:0007669"/>
    <property type="project" value="UniProtKB-UniRule"/>
</dbReference>
<dbReference type="GO" id="GO:0097216">
    <property type="term" value="F:guanosine tetraphosphate binding"/>
    <property type="evidence" value="ECO:0007669"/>
    <property type="project" value="UniProtKB-ARBA"/>
</dbReference>
<dbReference type="GO" id="GO:0003743">
    <property type="term" value="F:translation initiation factor activity"/>
    <property type="evidence" value="ECO:0007669"/>
    <property type="project" value="UniProtKB-UniRule"/>
</dbReference>
<dbReference type="CDD" id="cd01887">
    <property type="entry name" value="IF2_eIF5B"/>
    <property type="match status" value="1"/>
</dbReference>
<dbReference type="CDD" id="cd03702">
    <property type="entry name" value="IF2_mtIF2_II"/>
    <property type="match status" value="1"/>
</dbReference>
<dbReference type="CDD" id="cd03692">
    <property type="entry name" value="mtIF2_IVc"/>
    <property type="match status" value="1"/>
</dbReference>
<dbReference type="FunFam" id="2.40.30.10:FF:000007">
    <property type="entry name" value="Translation initiation factor IF-2"/>
    <property type="match status" value="1"/>
</dbReference>
<dbReference type="FunFam" id="2.40.30.10:FF:000008">
    <property type="entry name" value="Translation initiation factor IF-2"/>
    <property type="match status" value="1"/>
</dbReference>
<dbReference type="FunFam" id="3.40.50.10050:FF:000001">
    <property type="entry name" value="Translation initiation factor IF-2"/>
    <property type="match status" value="1"/>
</dbReference>
<dbReference type="FunFam" id="3.40.50.300:FF:000019">
    <property type="entry name" value="Translation initiation factor IF-2"/>
    <property type="match status" value="1"/>
</dbReference>
<dbReference type="Gene3D" id="3.40.50.300">
    <property type="entry name" value="P-loop containing nucleotide triphosphate hydrolases"/>
    <property type="match status" value="1"/>
</dbReference>
<dbReference type="Gene3D" id="2.40.30.10">
    <property type="entry name" value="Translation factors"/>
    <property type="match status" value="2"/>
</dbReference>
<dbReference type="Gene3D" id="3.40.50.10050">
    <property type="entry name" value="Translation initiation factor IF- 2, domain 3"/>
    <property type="match status" value="1"/>
</dbReference>
<dbReference type="HAMAP" id="MF_00100_B">
    <property type="entry name" value="IF_2_B"/>
    <property type="match status" value="1"/>
</dbReference>
<dbReference type="InterPro" id="IPR053905">
    <property type="entry name" value="EF-G-like_DII"/>
</dbReference>
<dbReference type="InterPro" id="IPR004161">
    <property type="entry name" value="EFTu-like_2"/>
</dbReference>
<dbReference type="InterPro" id="IPR044145">
    <property type="entry name" value="IF2_II"/>
</dbReference>
<dbReference type="InterPro" id="IPR006847">
    <property type="entry name" value="IF2_N"/>
</dbReference>
<dbReference type="InterPro" id="IPR027417">
    <property type="entry name" value="P-loop_NTPase"/>
</dbReference>
<dbReference type="InterPro" id="IPR005225">
    <property type="entry name" value="Small_GTP-bd"/>
</dbReference>
<dbReference type="InterPro" id="IPR000795">
    <property type="entry name" value="T_Tr_GTP-bd_dom"/>
</dbReference>
<dbReference type="InterPro" id="IPR000178">
    <property type="entry name" value="TF_IF2_bacterial-like"/>
</dbReference>
<dbReference type="InterPro" id="IPR015760">
    <property type="entry name" value="TIF_IF2"/>
</dbReference>
<dbReference type="InterPro" id="IPR023115">
    <property type="entry name" value="TIF_IF2_dom3"/>
</dbReference>
<dbReference type="InterPro" id="IPR036925">
    <property type="entry name" value="TIF_IF2_dom3_sf"/>
</dbReference>
<dbReference type="InterPro" id="IPR009000">
    <property type="entry name" value="Transl_B-barrel_sf"/>
</dbReference>
<dbReference type="NCBIfam" id="TIGR00487">
    <property type="entry name" value="IF-2"/>
    <property type="match status" value="1"/>
</dbReference>
<dbReference type="NCBIfam" id="TIGR00231">
    <property type="entry name" value="small_GTP"/>
    <property type="match status" value="1"/>
</dbReference>
<dbReference type="PANTHER" id="PTHR43381:SF5">
    <property type="entry name" value="TR-TYPE G DOMAIN-CONTAINING PROTEIN"/>
    <property type="match status" value="1"/>
</dbReference>
<dbReference type="PANTHER" id="PTHR43381">
    <property type="entry name" value="TRANSLATION INITIATION FACTOR IF-2-RELATED"/>
    <property type="match status" value="1"/>
</dbReference>
<dbReference type="Pfam" id="PF22042">
    <property type="entry name" value="EF-G_D2"/>
    <property type="match status" value="1"/>
</dbReference>
<dbReference type="Pfam" id="PF00009">
    <property type="entry name" value="GTP_EFTU"/>
    <property type="match status" value="1"/>
</dbReference>
<dbReference type="Pfam" id="PF03144">
    <property type="entry name" value="GTP_EFTU_D2"/>
    <property type="match status" value="1"/>
</dbReference>
<dbReference type="Pfam" id="PF11987">
    <property type="entry name" value="IF-2"/>
    <property type="match status" value="1"/>
</dbReference>
<dbReference type="Pfam" id="PF04760">
    <property type="entry name" value="IF2_N"/>
    <property type="match status" value="1"/>
</dbReference>
<dbReference type="SUPFAM" id="SSF52156">
    <property type="entry name" value="Initiation factor IF2/eIF5b, domain 3"/>
    <property type="match status" value="1"/>
</dbReference>
<dbReference type="SUPFAM" id="SSF52540">
    <property type="entry name" value="P-loop containing nucleoside triphosphate hydrolases"/>
    <property type="match status" value="1"/>
</dbReference>
<dbReference type="SUPFAM" id="SSF50447">
    <property type="entry name" value="Translation proteins"/>
    <property type="match status" value="2"/>
</dbReference>
<dbReference type="PROSITE" id="PS51722">
    <property type="entry name" value="G_TR_2"/>
    <property type="match status" value="1"/>
</dbReference>
<dbReference type="PROSITE" id="PS01176">
    <property type="entry name" value="IF2"/>
    <property type="match status" value="1"/>
</dbReference>
<gene>
    <name evidence="2" type="primary">infB</name>
    <name type="ordered locus">HD_1461</name>
</gene>
<reference key="1">
    <citation type="submission" date="2003-06" db="EMBL/GenBank/DDBJ databases">
        <title>The complete genome sequence of Haemophilus ducreyi.</title>
        <authorList>
            <person name="Munson R.S. Jr."/>
            <person name="Ray W.C."/>
            <person name="Mahairas G."/>
            <person name="Sabo P."/>
            <person name="Mungur R."/>
            <person name="Johnson L."/>
            <person name="Nguyen D."/>
            <person name="Wang J."/>
            <person name="Forst C."/>
            <person name="Hood L."/>
        </authorList>
    </citation>
    <scope>NUCLEOTIDE SEQUENCE [LARGE SCALE GENOMIC DNA]</scope>
    <source>
        <strain>35000HP / ATCC 700724</strain>
    </source>
</reference>
<name>IF2_HAEDU</name>
<evidence type="ECO:0000250" key="1"/>
<evidence type="ECO:0000255" key="2">
    <source>
        <dbReference type="HAMAP-Rule" id="MF_00100"/>
    </source>
</evidence>
<evidence type="ECO:0000256" key="3">
    <source>
        <dbReference type="SAM" id="MobiDB-lite"/>
    </source>
</evidence>
<protein>
    <recommendedName>
        <fullName evidence="2">Translation initiation factor IF-2</fullName>
    </recommendedName>
</protein>
<proteinExistence type="inferred from homology"/>
<sequence>MSDNEIKNETPKKLSLQRRTKTTIADGKVQVEVRKSRKIDTAVAKAEQAKLKAKQEAEAKAQEKQAAEKAAQAQTEAKAQTEQACTTKKTIQPPIIPGKQKAMPKTEAKKATPKTEKIVDAEKEAKRKEEAELRRKQEELASPKAEMEAKRAAENARRLAEIAREETVENGEEFEDNRFTSTYAREADRDHDRRSEGNRTRAKGGVAKAKKGGREDDKNERNSDRRNAKDIKGKKSKGKKGASLQQAFTKPVQAVKTDVVIGETITVAELANKMAIKATEIIKTMMKMGEMVTINQVIDQETAQLVAEELGHKVILRKENELEESVMEDRDIDAEKVTRAPVVTIMGHVDHGKTLLLDYIRKAKVAAGEAGGITQHIGAYHVETEDGKMITFLDTPGHAAFTSMRARGAKATDIVVLVVAADDGVMPQTIEAIQHAKAAGAPLVVAVNKIDKPEADPSRVEQELLQYEVVSEKFGGDVQFVAVSAKKGMGIDELLEAIILQSEVLELTAVKKGMASGVVIESYLDKGRGPVATILVQSGTLNKGDIVLCGFEYGRVRAMRDENGKDINSAGPSIPVEVLGLSGVPSAGDEATVVRDEKKAREVALYRQGKYREVKLARQQKAKLENMFSNMTEGDIAELNVIVKADVQGSVEAICQALGELSTEEVKVKVVGSGVGGITETDATLAAASNAIMVGFNVRADASARRVIENENIDLRYYSIIYELLNEIKAAMTGMLQPEFKQEIIGLAEVRNIFRHPKFGAIAGCMVTEGIIKRNNPIRVLRDNVVIFEGELDSLRRFKDDVAEVRNGMECGIGVKNYNDVKVGDQIEVFEVVEIKRSI</sequence>
<accession>Q7VLI2</accession>
<feature type="chain" id="PRO_0000137206" description="Translation initiation factor IF-2">
    <location>
        <begin position="1"/>
        <end position="839"/>
    </location>
</feature>
<feature type="domain" description="tr-type G">
    <location>
        <begin position="338"/>
        <end position="508"/>
    </location>
</feature>
<feature type="region of interest" description="Disordered" evidence="3">
    <location>
        <begin position="1"/>
        <end position="21"/>
    </location>
</feature>
<feature type="region of interest" description="Disordered" evidence="3">
    <location>
        <begin position="57"/>
        <end position="244"/>
    </location>
</feature>
<feature type="region of interest" description="G1" evidence="1">
    <location>
        <begin position="347"/>
        <end position="354"/>
    </location>
</feature>
<feature type="region of interest" description="G2" evidence="1">
    <location>
        <begin position="372"/>
        <end position="376"/>
    </location>
</feature>
<feature type="region of interest" description="G3" evidence="1">
    <location>
        <begin position="394"/>
        <end position="397"/>
    </location>
</feature>
<feature type="region of interest" description="G4" evidence="1">
    <location>
        <begin position="448"/>
        <end position="451"/>
    </location>
</feature>
<feature type="region of interest" description="G5" evidence="1">
    <location>
        <begin position="484"/>
        <end position="486"/>
    </location>
</feature>
<feature type="compositionally biased region" description="Basic and acidic residues" evidence="3">
    <location>
        <begin position="1"/>
        <end position="12"/>
    </location>
</feature>
<feature type="compositionally biased region" description="Basic and acidic residues" evidence="3">
    <location>
        <begin position="57"/>
        <end position="67"/>
    </location>
</feature>
<feature type="compositionally biased region" description="Low complexity" evidence="3">
    <location>
        <begin position="68"/>
        <end position="90"/>
    </location>
</feature>
<feature type="compositionally biased region" description="Basic and acidic residues" evidence="3">
    <location>
        <begin position="104"/>
        <end position="167"/>
    </location>
</feature>
<feature type="compositionally biased region" description="Basic and acidic residues" evidence="3">
    <location>
        <begin position="185"/>
        <end position="199"/>
    </location>
</feature>
<feature type="compositionally biased region" description="Basic and acidic residues" evidence="3">
    <location>
        <begin position="212"/>
        <end position="233"/>
    </location>
</feature>
<feature type="binding site" evidence="2">
    <location>
        <begin position="347"/>
        <end position="354"/>
    </location>
    <ligand>
        <name>GTP</name>
        <dbReference type="ChEBI" id="CHEBI:37565"/>
    </ligand>
</feature>
<feature type="binding site" evidence="2">
    <location>
        <begin position="394"/>
        <end position="398"/>
    </location>
    <ligand>
        <name>GTP</name>
        <dbReference type="ChEBI" id="CHEBI:37565"/>
    </ligand>
</feature>
<feature type="binding site" evidence="2">
    <location>
        <begin position="448"/>
        <end position="451"/>
    </location>
    <ligand>
        <name>GTP</name>
        <dbReference type="ChEBI" id="CHEBI:37565"/>
    </ligand>
</feature>
<comment type="function">
    <text evidence="2">One of the essential components for the initiation of protein synthesis. Protects formylmethionyl-tRNA from spontaneous hydrolysis and promotes its binding to the 30S ribosomal subunits. Also involved in the hydrolysis of GTP during the formation of the 70S ribosomal complex.</text>
</comment>
<comment type="subcellular location">
    <subcellularLocation>
        <location evidence="2">Cytoplasm</location>
    </subcellularLocation>
</comment>
<comment type="similarity">
    <text evidence="2">Belongs to the TRAFAC class translation factor GTPase superfamily. Classic translation factor GTPase family. IF-2 subfamily.</text>
</comment>
<organism>
    <name type="scientific">Haemophilus ducreyi (strain 35000HP / ATCC 700724)</name>
    <dbReference type="NCBI Taxonomy" id="233412"/>
    <lineage>
        <taxon>Bacteria</taxon>
        <taxon>Pseudomonadati</taxon>
        <taxon>Pseudomonadota</taxon>
        <taxon>Gammaproteobacteria</taxon>
        <taxon>Pasteurellales</taxon>
        <taxon>Pasteurellaceae</taxon>
        <taxon>Haemophilus</taxon>
    </lineage>
</organism>
<keyword id="KW-0963">Cytoplasm</keyword>
<keyword id="KW-0342">GTP-binding</keyword>
<keyword id="KW-0396">Initiation factor</keyword>
<keyword id="KW-0547">Nucleotide-binding</keyword>
<keyword id="KW-0648">Protein biosynthesis</keyword>
<keyword id="KW-1185">Reference proteome</keyword>